<organism>
    <name type="scientific">Coxiella burnetii (strain CbuG_Q212)</name>
    <name type="common">Coxiella burnetii (strain Q212)</name>
    <dbReference type="NCBI Taxonomy" id="434923"/>
    <lineage>
        <taxon>Bacteria</taxon>
        <taxon>Pseudomonadati</taxon>
        <taxon>Pseudomonadota</taxon>
        <taxon>Gammaproteobacteria</taxon>
        <taxon>Legionellales</taxon>
        <taxon>Coxiellaceae</taxon>
        <taxon>Coxiella</taxon>
    </lineage>
</organism>
<comment type="function">
    <text evidence="1">Catalyzes the stereoinversion of LL-2,6-diaminopimelate (L,L-DAP) to meso-diaminopimelate (meso-DAP), a precursor of L-lysine and an essential component of the bacterial peptidoglycan.</text>
</comment>
<comment type="catalytic activity">
    <reaction evidence="1">
        <text>(2S,6S)-2,6-diaminopimelate = meso-2,6-diaminopimelate</text>
        <dbReference type="Rhea" id="RHEA:15393"/>
        <dbReference type="ChEBI" id="CHEBI:57609"/>
        <dbReference type="ChEBI" id="CHEBI:57791"/>
        <dbReference type="EC" id="5.1.1.7"/>
    </reaction>
</comment>
<comment type="pathway">
    <text evidence="1">Amino-acid biosynthesis; L-lysine biosynthesis via DAP pathway; DL-2,6-diaminopimelate from LL-2,6-diaminopimelate: step 1/1.</text>
</comment>
<comment type="subunit">
    <text evidence="1">Homodimer.</text>
</comment>
<comment type="subcellular location">
    <subcellularLocation>
        <location evidence="1">Cytoplasm</location>
    </subcellularLocation>
</comment>
<comment type="similarity">
    <text evidence="1">Belongs to the diaminopimelate epimerase family.</text>
</comment>
<dbReference type="EC" id="5.1.1.7" evidence="1"/>
<dbReference type="EMBL" id="CP001019">
    <property type="protein sequence ID" value="ACJ19220.1"/>
    <property type="molecule type" value="Genomic_DNA"/>
</dbReference>
<dbReference type="RefSeq" id="WP_005769680.1">
    <property type="nucleotide sequence ID" value="NC_011527.1"/>
</dbReference>
<dbReference type="SMR" id="B6J395"/>
<dbReference type="KEGG" id="cbg:CbuG_1978"/>
<dbReference type="HOGENOM" id="CLU_053306_1_1_6"/>
<dbReference type="UniPathway" id="UPA00034">
    <property type="reaction ID" value="UER00025"/>
</dbReference>
<dbReference type="GO" id="GO:0005829">
    <property type="term" value="C:cytosol"/>
    <property type="evidence" value="ECO:0007669"/>
    <property type="project" value="TreeGrafter"/>
</dbReference>
<dbReference type="GO" id="GO:0008837">
    <property type="term" value="F:diaminopimelate epimerase activity"/>
    <property type="evidence" value="ECO:0007669"/>
    <property type="project" value="UniProtKB-UniRule"/>
</dbReference>
<dbReference type="GO" id="GO:0009089">
    <property type="term" value="P:lysine biosynthetic process via diaminopimelate"/>
    <property type="evidence" value="ECO:0007669"/>
    <property type="project" value="UniProtKB-UniRule"/>
</dbReference>
<dbReference type="FunFam" id="3.10.310.10:FF:000001">
    <property type="entry name" value="Diaminopimelate epimerase"/>
    <property type="match status" value="1"/>
</dbReference>
<dbReference type="Gene3D" id="3.10.310.10">
    <property type="entry name" value="Diaminopimelate Epimerase, Chain A, domain 1"/>
    <property type="match status" value="2"/>
</dbReference>
<dbReference type="HAMAP" id="MF_00197">
    <property type="entry name" value="DAP_epimerase"/>
    <property type="match status" value="1"/>
</dbReference>
<dbReference type="InterPro" id="IPR018510">
    <property type="entry name" value="DAP_epimerase_AS"/>
</dbReference>
<dbReference type="InterPro" id="IPR001653">
    <property type="entry name" value="DAP_epimerase_DapF"/>
</dbReference>
<dbReference type="NCBIfam" id="TIGR00652">
    <property type="entry name" value="DapF"/>
    <property type="match status" value="1"/>
</dbReference>
<dbReference type="PANTHER" id="PTHR31689:SF0">
    <property type="entry name" value="DIAMINOPIMELATE EPIMERASE"/>
    <property type="match status" value="1"/>
</dbReference>
<dbReference type="PANTHER" id="PTHR31689">
    <property type="entry name" value="DIAMINOPIMELATE EPIMERASE, CHLOROPLASTIC"/>
    <property type="match status" value="1"/>
</dbReference>
<dbReference type="Pfam" id="PF01678">
    <property type="entry name" value="DAP_epimerase"/>
    <property type="match status" value="2"/>
</dbReference>
<dbReference type="SUPFAM" id="SSF54506">
    <property type="entry name" value="Diaminopimelate epimerase-like"/>
    <property type="match status" value="2"/>
</dbReference>
<dbReference type="PROSITE" id="PS01326">
    <property type="entry name" value="DAP_EPIMERASE"/>
    <property type="match status" value="1"/>
</dbReference>
<reference key="1">
    <citation type="journal article" date="2009" name="Infect. Immun.">
        <title>Comparative genomics reveal extensive transposon-mediated genomic plasticity and diversity among potential effector proteins within the genus Coxiella.</title>
        <authorList>
            <person name="Beare P.A."/>
            <person name="Unsworth N."/>
            <person name="Andoh M."/>
            <person name="Voth D.E."/>
            <person name="Omsland A."/>
            <person name="Gilk S.D."/>
            <person name="Williams K.P."/>
            <person name="Sobral B.W."/>
            <person name="Kupko J.J. III"/>
            <person name="Porcella S.F."/>
            <person name="Samuel J.E."/>
            <person name="Heinzen R.A."/>
        </authorList>
    </citation>
    <scope>NUCLEOTIDE SEQUENCE [LARGE SCALE GENOMIC DNA]</scope>
    <source>
        <strain>CbuG_Q212</strain>
    </source>
</reference>
<name>DAPF_COXB2</name>
<evidence type="ECO:0000255" key="1">
    <source>
        <dbReference type="HAMAP-Rule" id="MF_00197"/>
    </source>
</evidence>
<feature type="chain" id="PRO_1000099229" description="Diaminopimelate epimerase">
    <location>
        <begin position="1"/>
        <end position="276"/>
    </location>
</feature>
<feature type="active site" description="Proton donor" evidence="1">
    <location>
        <position position="75"/>
    </location>
</feature>
<feature type="active site" description="Proton acceptor" evidence="1">
    <location>
        <position position="219"/>
    </location>
</feature>
<feature type="binding site" evidence="1">
    <location>
        <position position="13"/>
    </location>
    <ligand>
        <name>substrate</name>
    </ligand>
</feature>
<feature type="binding site" evidence="1">
    <location>
        <position position="46"/>
    </location>
    <ligand>
        <name>substrate</name>
    </ligand>
</feature>
<feature type="binding site" evidence="1">
    <location>
        <position position="66"/>
    </location>
    <ligand>
        <name>substrate</name>
    </ligand>
</feature>
<feature type="binding site" evidence="1">
    <location>
        <begin position="76"/>
        <end position="77"/>
    </location>
    <ligand>
        <name>substrate</name>
    </ligand>
</feature>
<feature type="binding site" evidence="1">
    <location>
        <position position="159"/>
    </location>
    <ligand>
        <name>substrate</name>
    </ligand>
</feature>
<feature type="binding site" evidence="1">
    <location>
        <position position="192"/>
    </location>
    <ligand>
        <name>substrate</name>
    </ligand>
</feature>
<feature type="binding site" evidence="1">
    <location>
        <begin position="210"/>
        <end position="211"/>
    </location>
    <ligand>
        <name>substrate</name>
    </ligand>
</feature>
<feature type="binding site" evidence="1">
    <location>
        <begin position="220"/>
        <end position="221"/>
    </location>
    <ligand>
        <name>substrate</name>
    </ligand>
</feature>
<feature type="site" description="Could be important to modulate the pK values of the two catalytic cysteine residues" evidence="1">
    <location>
        <position position="161"/>
    </location>
</feature>
<feature type="site" description="Could be important to modulate the pK values of the two catalytic cysteine residues" evidence="1">
    <location>
        <position position="210"/>
    </location>
</feature>
<feature type="site" description="Important for dimerization" evidence="1">
    <location>
        <position position="270"/>
    </location>
</feature>
<gene>
    <name evidence="1" type="primary">dapF</name>
    <name type="ordered locus">CbuG_1978</name>
</gene>
<sequence length="276" mass="30071">MKVNFTKMQGSGNDFVVIDATKTPFQLTTSQIQKMANRRFGVGFDQLLVIEPPKNNSVDFHFRIFNADGSEVGQCGNGARCIARFIRAHQLSDREELRVSTLNEVLELKIQPDGKVSVKMGVPRFEPTEIPFIASGVANFYDIAVDNQIVKLGVVNIGNPHAIIPVERINAEEVGKLGARLSVHECFPEGANVGFMQVIDPQNIRLRVYERGTGETLACGSNACAAVAVGRRCGLLQERVVVSQPGGSLTIDWQGPLTPVTMTGPATTVFCGEWLD</sequence>
<proteinExistence type="inferred from homology"/>
<protein>
    <recommendedName>
        <fullName evidence="1">Diaminopimelate epimerase</fullName>
        <shortName evidence="1">DAP epimerase</shortName>
        <ecNumber evidence="1">5.1.1.7</ecNumber>
    </recommendedName>
    <alternativeName>
        <fullName evidence="1">PLP-independent amino acid racemase</fullName>
    </alternativeName>
</protein>
<keyword id="KW-0028">Amino-acid biosynthesis</keyword>
<keyword id="KW-0963">Cytoplasm</keyword>
<keyword id="KW-0413">Isomerase</keyword>
<keyword id="KW-0457">Lysine biosynthesis</keyword>
<accession>B6J395</accession>